<organism>
    <name type="scientific">Methanocaldococcus jannaschii (strain ATCC 43067 / DSM 2661 / JAL-1 / JCM 10045 / NBRC 100440)</name>
    <name type="common">Methanococcus jannaschii</name>
    <dbReference type="NCBI Taxonomy" id="243232"/>
    <lineage>
        <taxon>Archaea</taxon>
        <taxon>Methanobacteriati</taxon>
        <taxon>Methanobacteriota</taxon>
        <taxon>Methanomada group</taxon>
        <taxon>Methanococci</taxon>
        <taxon>Methanococcales</taxon>
        <taxon>Methanocaldococcaceae</taxon>
        <taxon>Methanocaldococcus</taxon>
    </lineage>
</organism>
<protein>
    <recommendedName>
        <fullName>Uncharacterized protein MJ0088</fullName>
    </recommendedName>
</protein>
<name>Y088_METJA</name>
<gene>
    <name type="ordered locus">MJ0088</name>
</gene>
<sequence length="180" mass="21797">MPNIWGGMLEKTVKITFIFESEKRLNWEGYVNYLIFAHYFKLIYILLRNNKELLERILKDSLDNKEDYHKLGKYLHHDIMGYIRRHGYLSFLPFTPLPFYKELCEKFMTKIPEKPIIDYKCIERIENNKIIFEFEGEEECLRCLMYLKDSSIDESIKVIKSEEMVVKILEILLYILHNLL</sequence>
<keyword id="KW-1185">Reference proteome</keyword>
<dbReference type="EMBL" id="L77117">
    <property type="protein sequence ID" value="AAB98075.1"/>
    <property type="molecule type" value="Genomic_DNA"/>
</dbReference>
<dbReference type="PIR" id="H64310">
    <property type="entry name" value="H64310"/>
</dbReference>
<dbReference type="SMR" id="Q57553"/>
<dbReference type="STRING" id="243232.MJ_0088"/>
<dbReference type="PaxDb" id="243232-MJ_0088"/>
<dbReference type="EnsemblBacteria" id="AAB98075">
    <property type="protein sequence ID" value="AAB98075"/>
    <property type="gene ID" value="MJ_0088"/>
</dbReference>
<dbReference type="KEGG" id="mja:MJ_0088"/>
<dbReference type="eggNOG" id="arCOG12714">
    <property type="taxonomic scope" value="Archaea"/>
</dbReference>
<dbReference type="HOGENOM" id="CLU_1492985_0_0_2"/>
<dbReference type="InParanoid" id="Q57553"/>
<dbReference type="OrthoDB" id="374083at2157"/>
<dbReference type="Proteomes" id="UP000000805">
    <property type="component" value="Chromosome"/>
</dbReference>
<reference key="1">
    <citation type="journal article" date="1996" name="Science">
        <title>Complete genome sequence of the methanogenic archaeon, Methanococcus jannaschii.</title>
        <authorList>
            <person name="Bult C.J."/>
            <person name="White O."/>
            <person name="Olsen G.J."/>
            <person name="Zhou L."/>
            <person name="Fleischmann R.D."/>
            <person name="Sutton G.G."/>
            <person name="Blake J.A."/>
            <person name="FitzGerald L.M."/>
            <person name="Clayton R.A."/>
            <person name="Gocayne J.D."/>
            <person name="Kerlavage A.R."/>
            <person name="Dougherty B.A."/>
            <person name="Tomb J.-F."/>
            <person name="Adams M.D."/>
            <person name="Reich C.I."/>
            <person name="Overbeek R."/>
            <person name="Kirkness E.F."/>
            <person name="Weinstock K.G."/>
            <person name="Merrick J.M."/>
            <person name="Glodek A."/>
            <person name="Scott J.L."/>
            <person name="Geoghagen N.S.M."/>
            <person name="Weidman J.F."/>
            <person name="Fuhrmann J.L."/>
            <person name="Nguyen D."/>
            <person name="Utterback T.R."/>
            <person name="Kelley J.M."/>
            <person name="Peterson J.D."/>
            <person name="Sadow P.W."/>
            <person name="Hanna M.C."/>
            <person name="Cotton M.D."/>
            <person name="Roberts K.M."/>
            <person name="Hurst M.A."/>
            <person name="Kaine B.P."/>
            <person name="Borodovsky M."/>
            <person name="Klenk H.-P."/>
            <person name="Fraser C.M."/>
            <person name="Smith H.O."/>
            <person name="Woese C.R."/>
            <person name="Venter J.C."/>
        </authorList>
    </citation>
    <scope>NUCLEOTIDE SEQUENCE [LARGE SCALE GENOMIC DNA]</scope>
    <source>
        <strain>ATCC 43067 / DSM 2661 / JAL-1 / JCM 10045 / NBRC 100440</strain>
    </source>
</reference>
<accession>Q57553</accession>
<proteinExistence type="predicted"/>
<feature type="chain" id="PRO_0000106688" description="Uncharacterized protein MJ0088">
    <location>
        <begin position="1"/>
        <end position="180"/>
    </location>
</feature>